<reference key="1">
    <citation type="journal article" date="1998" name="Science">
        <title>Genome sequence of the nematode C. elegans: a platform for investigating biology.</title>
        <authorList>
            <consortium name="The C. elegans sequencing consortium"/>
        </authorList>
    </citation>
    <scope>NUCLEOTIDE SEQUENCE [LARGE SCALE GENOMIC DNA]</scope>
    <source>
        <strain>Bristol N2</strain>
    </source>
</reference>
<feature type="chain" id="PRO_0000065223" description="Protein CLEC16A homolog">
    <location>
        <begin position="1"/>
        <end position="892"/>
    </location>
</feature>
<feature type="domain" description="FPL" evidence="2">
    <location>
        <begin position="48"/>
        <end position="194"/>
    </location>
</feature>
<feature type="region of interest" description="Disordered" evidence="3">
    <location>
        <begin position="844"/>
        <end position="892"/>
    </location>
</feature>
<feature type="compositionally biased region" description="Low complexity" evidence="3">
    <location>
        <begin position="844"/>
        <end position="856"/>
    </location>
</feature>
<feature type="compositionally biased region" description="Polar residues" evidence="3">
    <location>
        <begin position="882"/>
        <end position="892"/>
    </location>
</feature>
<evidence type="ECO:0000250" key="1">
    <source>
        <dbReference type="UniProtKB" id="Q80U30"/>
    </source>
</evidence>
<evidence type="ECO:0000255" key="2"/>
<evidence type="ECO:0000256" key="3">
    <source>
        <dbReference type="SAM" id="MobiDB-lite"/>
    </source>
</evidence>
<evidence type="ECO:0000305" key="4"/>
<gene>
    <name type="primary">gop-1</name>
    <name type="ORF">C34E10.3</name>
</gene>
<proteinExistence type="inferred from homology"/>
<sequence length="892" mass="100861">MFRKLGSSGSLWKPKNPHSLEYLKYLQGVLTKNEKVTENNKKILVEALRAIAEILIWGDQNDASVFDFFLERQMLLYFLKIMEQGNTPLNVQLLQTLNILFENIRHETSLYFLLSNNHVNSIISHKFDLQNDEIMAYYISFLKTLSFKLNPATIHFFFNETTEEFPLLVEVLKLYNWNESMVRIAVRNILLNIVRVQDDSMIIFAIKHTKEYLSELIDSLVGLSLEMDTFVRSAENVLANRERLRGKVDDLIDLIHYIGELLDVEAVAESLSILVTTRYLSPLLLSSISPRRDNHSLLLTPISALFFFSEFLLIVRHHETIYTFLSSFLFDTQNTLTTHWIRHNEKYCLEPITLSSPTGEYVNEDHVFFDFLLEAFDSSQADDSKAFYGLMLIYSMFQNNADVGELLSAANFPVLKESTTTSLAQQNLARLRIASTSSISKRTRAITEIGVEATEEDEIFHDVPEEQTLEDLVDDVLVDTENSAISDPEPKNVESESRSRFQSAVDELPPPSTSGCDGRLFDALSSIIKAVGTDDNRIRPITLELACLVIRQILMTVDDEKVHTSLTKLCFEVRLKLLSSIGQYVNGENLFLEWFEDEYAEFEVNHVNFDIIGHEMLLPPAATPLSNLLLHKRLPSGFEERIRTQIVFYLHIRKLERDLTGEGDTELPVRVLNSDQEPVAIGDCINLHNSDLLSCTVVPQQLCSLGKPGDRLARFLVTDRLQLILVEPDSRKAGWAIVRFVGLLQDTTINGDSTDSKVLHVVVEGQPSRIKKRHPVLTAKFIFDDHIRCMAAKQRLTKGRQTARGLKLQAICSALGVPRIDPATMTSSPRMNPFRIVKGCAPGSVRKTVSTSSSSSQGRPGHYSANLRSASRNAGMIPDDPTQPSSSSERRS</sequence>
<accession>P46578</accession>
<protein>
    <recommendedName>
        <fullName evidence="4">Protein CLEC16A homolog</fullName>
    </recommendedName>
</protein>
<comment type="function">
    <text evidence="1">Regulator of mitophagy.</text>
</comment>
<comment type="similarity">
    <text evidence="4">Belongs to the CLEC16A/gop-1 family.</text>
</comment>
<organism>
    <name type="scientific">Caenorhabditis elegans</name>
    <dbReference type="NCBI Taxonomy" id="6239"/>
    <lineage>
        <taxon>Eukaryota</taxon>
        <taxon>Metazoa</taxon>
        <taxon>Ecdysozoa</taxon>
        <taxon>Nematoda</taxon>
        <taxon>Chromadorea</taxon>
        <taxon>Rhabditida</taxon>
        <taxon>Rhabditina</taxon>
        <taxon>Rhabditomorpha</taxon>
        <taxon>Rhabditoidea</taxon>
        <taxon>Rhabditidae</taxon>
        <taxon>Peloderinae</taxon>
        <taxon>Caenorhabditis</taxon>
    </lineage>
</organism>
<dbReference type="EMBL" id="FO080774">
    <property type="protein sequence ID" value="CCD66647.1"/>
    <property type="molecule type" value="Genomic_DNA"/>
</dbReference>
<dbReference type="PIR" id="T15760">
    <property type="entry name" value="T15760"/>
</dbReference>
<dbReference type="RefSeq" id="NP_498117.3">
    <property type="nucleotide sequence ID" value="NM_065716.4"/>
</dbReference>
<dbReference type="SMR" id="P46578"/>
<dbReference type="BioGRID" id="40952">
    <property type="interactions" value="2"/>
</dbReference>
<dbReference type="FunCoup" id="P46578">
    <property type="interactions" value="2879"/>
</dbReference>
<dbReference type="STRING" id="6239.C34E10.3.1"/>
<dbReference type="PaxDb" id="6239-C34E10.3"/>
<dbReference type="PeptideAtlas" id="P46578"/>
<dbReference type="EnsemblMetazoa" id="C34E10.3.1">
    <property type="protein sequence ID" value="C34E10.3.1"/>
    <property type="gene ID" value="WBGene00001660"/>
</dbReference>
<dbReference type="GeneID" id="175721"/>
<dbReference type="KEGG" id="cel:CELE_C34E10.3"/>
<dbReference type="UCSC" id="C34E10.3">
    <property type="organism name" value="c. elegans"/>
</dbReference>
<dbReference type="AGR" id="WB:WBGene00001660"/>
<dbReference type="CTD" id="175721"/>
<dbReference type="WormBase" id="C34E10.3">
    <property type="protein sequence ID" value="CE01183"/>
    <property type="gene ID" value="WBGene00001660"/>
    <property type="gene designation" value="gop-1"/>
</dbReference>
<dbReference type="eggNOG" id="KOG2219">
    <property type="taxonomic scope" value="Eukaryota"/>
</dbReference>
<dbReference type="GeneTree" id="ENSGT00390000013826"/>
<dbReference type="HOGENOM" id="CLU_007413_1_0_1"/>
<dbReference type="InParanoid" id="P46578"/>
<dbReference type="OMA" id="SMQEQNT"/>
<dbReference type="OrthoDB" id="294052at2759"/>
<dbReference type="PhylomeDB" id="P46578"/>
<dbReference type="PRO" id="PR:P46578"/>
<dbReference type="Proteomes" id="UP000001940">
    <property type="component" value="Chromosome III"/>
</dbReference>
<dbReference type="Bgee" id="WBGene00001660">
    <property type="expression patterns" value="Expressed in germ line (C elegans) and 4 other cell types or tissues"/>
</dbReference>
<dbReference type="GO" id="GO:0005794">
    <property type="term" value="C:Golgi apparatus"/>
    <property type="evidence" value="ECO:0000318"/>
    <property type="project" value="GO_Central"/>
</dbReference>
<dbReference type="GO" id="GO:0006914">
    <property type="term" value="P:autophagy"/>
    <property type="evidence" value="ECO:0007669"/>
    <property type="project" value="UniProtKB-KW"/>
</dbReference>
<dbReference type="GO" id="GO:0016197">
    <property type="term" value="P:endosomal transport"/>
    <property type="evidence" value="ECO:0000318"/>
    <property type="project" value="GO_Central"/>
</dbReference>
<dbReference type="GO" id="GO:1901096">
    <property type="term" value="P:regulation of autophagosome maturation"/>
    <property type="evidence" value="ECO:0000318"/>
    <property type="project" value="GO_Central"/>
</dbReference>
<dbReference type="GO" id="GO:0007034">
    <property type="term" value="P:vacuolar transport"/>
    <property type="evidence" value="ECO:0000318"/>
    <property type="project" value="GO_Central"/>
</dbReference>
<dbReference type="InterPro" id="IPR016024">
    <property type="entry name" value="ARM-type_fold"/>
</dbReference>
<dbReference type="InterPro" id="IPR039272">
    <property type="entry name" value="CLEC16A/TT9"/>
</dbReference>
<dbReference type="InterPro" id="IPR045820">
    <property type="entry name" value="CLEC16A/TT9_C"/>
</dbReference>
<dbReference type="InterPro" id="IPR019155">
    <property type="entry name" value="CLEC16A/TT9_N"/>
</dbReference>
<dbReference type="PANTHER" id="PTHR21481">
    <property type="entry name" value="PROTEIN CLEC16A"/>
    <property type="match status" value="1"/>
</dbReference>
<dbReference type="PANTHER" id="PTHR21481:SF0">
    <property type="entry name" value="PROTEIN CLEC16A"/>
    <property type="match status" value="1"/>
</dbReference>
<dbReference type="Pfam" id="PF19439">
    <property type="entry name" value="CLEC16A_C"/>
    <property type="match status" value="1"/>
</dbReference>
<dbReference type="Pfam" id="PF09758">
    <property type="entry name" value="FPL"/>
    <property type="match status" value="1"/>
</dbReference>
<dbReference type="SUPFAM" id="SSF48371">
    <property type="entry name" value="ARM repeat"/>
    <property type="match status" value="1"/>
</dbReference>
<name>GOP1_CAEEL</name>
<keyword id="KW-0072">Autophagy</keyword>
<keyword id="KW-1185">Reference proteome</keyword>